<feature type="chain" id="PRO_0000444194" description="(S)-8-oxocitronellyl enol synthase CYC2">
    <location>
        <begin position="1"/>
        <end position="390"/>
    </location>
</feature>
<feature type="active site" evidence="1">
    <location>
        <position position="147"/>
    </location>
</feature>
<feature type="active site" evidence="1">
    <location>
        <position position="179"/>
    </location>
</feature>
<feature type="binding site" evidence="1">
    <location>
        <begin position="35"/>
        <end position="37"/>
    </location>
    <ligand>
        <name>NADP(+)</name>
        <dbReference type="ChEBI" id="CHEBI:58349"/>
    </ligand>
</feature>
<feature type="binding site" evidence="1">
    <location>
        <begin position="63"/>
        <end position="64"/>
    </location>
    <ligand>
        <name>NADP(+)</name>
        <dbReference type="ChEBI" id="CHEBI:58349"/>
    </ligand>
</feature>
<feature type="binding site" evidence="1">
    <location>
        <begin position="81"/>
        <end position="82"/>
    </location>
    <ligand>
        <name>NADP(+)</name>
        <dbReference type="ChEBI" id="CHEBI:58349"/>
    </ligand>
</feature>
<feature type="binding site" evidence="1">
    <location>
        <begin position="105"/>
        <end position="106"/>
    </location>
    <ligand>
        <name>NADP(+)</name>
        <dbReference type="ChEBI" id="CHEBI:58349"/>
    </ligand>
</feature>
<feature type="binding site" evidence="1">
    <location>
        <position position="143"/>
    </location>
    <ligand>
        <name>NADP(+)</name>
        <dbReference type="ChEBI" id="CHEBI:58349"/>
    </ligand>
</feature>
<feature type="binding site" evidence="1">
    <location>
        <position position="147"/>
    </location>
    <ligand>
        <name>substrate</name>
    </ligand>
</feature>
<feature type="binding site" evidence="1">
    <location>
        <position position="179"/>
    </location>
    <ligand>
        <name>NADP(+)</name>
        <dbReference type="ChEBI" id="CHEBI:58349"/>
    </ligand>
</feature>
<feature type="binding site" evidence="1">
    <location>
        <position position="179"/>
    </location>
    <ligand>
        <name>substrate</name>
    </ligand>
</feature>
<feature type="binding site" evidence="1">
    <location>
        <begin position="213"/>
        <end position="215"/>
    </location>
    <ligand>
        <name>NADP(+)</name>
        <dbReference type="ChEBI" id="CHEBI:58349"/>
    </ligand>
</feature>
<reference key="1">
    <citation type="journal article" date="2016" name="Plant Cell">
        <title>Metabolite diversity in alkaloid biosynthesis: a multilane (diastereomer) highway for camptothecin synthesis in Camptotheca acuminata.</title>
        <authorList>
            <person name="Sadre R."/>
            <person name="Magallanes-Lundback M."/>
            <person name="Pradhan S."/>
            <person name="Salim V."/>
            <person name="Mesberg A."/>
            <person name="Jones A.D."/>
            <person name="DellaPenna D."/>
        </authorList>
    </citation>
    <scope>NUCLEOTIDE SEQUENCE [MRNA]</scope>
    <scope>FUNCTION</scope>
    <scope>CATALYTIC ACTIVITY</scope>
</reference>
<comment type="function">
    <text evidence="1 2">Iridoid synthase that catalyzes the first step in generation of the iridoid ring scaffold using the linear monoterpene (6E)-8-oxogeranial as substrate. Iridoids comprise a large family of distinctive bicyclic monoterpenes that possess a wide range of pharmacological activities, including anticancer, anti-inflammatory, antifungal and antibacterial activities.</text>
</comment>
<comment type="catalytic activity">
    <reaction evidence="1 2">
        <text>(S)-8-oxocitronellyl enol + NADP(+) = (6E)-8-oxogeranial + NADPH + H(+)</text>
        <dbReference type="Rhea" id="RHEA:62592"/>
        <dbReference type="ChEBI" id="CHEBI:15378"/>
        <dbReference type="ChEBI" id="CHEBI:57783"/>
        <dbReference type="ChEBI" id="CHEBI:58349"/>
        <dbReference type="ChEBI" id="CHEBI:64239"/>
        <dbReference type="ChEBI" id="CHEBI:144481"/>
        <dbReference type="EC" id="1.3.1.122"/>
    </reaction>
    <physiologicalReaction direction="right-to-left" evidence="1 2">
        <dbReference type="Rhea" id="RHEA:62594"/>
    </physiologicalReaction>
</comment>
<comment type="catalytic activity">
    <reaction evidence="1 2">
        <text>(S)-8-oxocitronellyl enol + NAD(+) = (6E)-8-oxogeranial + NADH + H(+)</text>
        <dbReference type="Rhea" id="RHEA:62596"/>
        <dbReference type="ChEBI" id="CHEBI:15378"/>
        <dbReference type="ChEBI" id="CHEBI:57540"/>
        <dbReference type="ChEBI" id="CHEBI:57945"/>
        <dbReference type="ChEBI" id="CHEBI:64239"/>
        <dbReference type="ChEBI" id="CHEBI:144481"/>
        <dbReference type="EC" id="1.3.1.122"/>
    </reaction>
    <physiologicalReaction direction="right-to-left" evidence="1 2">
        <dbReference type="Rhea" id="RHEA:62598"/>
    </physiologicalReaction>
</comment>
<comment type="similarity">
    <text evidence="4">Belongs to the short-chain dehydrogenases/reductases (SDR) family. Highly divergent.</text>
</comment>
<comment type="caution">
    <text evidence="1">Was originally thought to catalyze the entire reaction from (6E)-8-oxogeranial to nepetalactol including a cyclase step, but new results have shown that the cyclase is a different enzyme and this enzyme exclusively catalyzes a reduction step.</text>
</comment>
<accession>A0A1C9CX66</accession>
<name>CYC2_CAMAC</name>
<protein>
    <recommendedName>
        <fullName evidence="4">(S)-8-oxocitronellyl enol synthase CYC2</fullName>
        <ecNumber evidence="2">1.3.1.122</ecNumber>
    </recommendedName>
    <alternativeName>
        <fullName evidence="3">Cyclase 2</fullName>
    </alternativeName>
    <alternativeName>
        <fullName evidence="4">Iridoid synthase</fullName>
        <shortName evidence="4">ISY</shortName>
    </alternativeName>
</protein>
<sequence>MSWWWAGAIGAARKKFEEDDAPRDCQSVALIIGVTGIVGNSLAEILPISDTPGGPWKVYGVARRPRPAWNADHPVEYIQCDISDASDTHTKLSPLTDVTHIFWVTWANRPTESECCELNGTMLRNVLNALIPKAANLHHICLQTGHKHYIGPFEAFGKIKPHEPPFTEDMPRLNAPNFYYTLEDMLVEASEKKAGLNWSVHRPAVIFGFSPFSMMNIIGTLCVYAAICKHENTPLKFPGTKAAWNCYSVASDADLIAEHQIWAAVDPYAKNEAFNCSNGDLFKWKHLWKVLAEQFGVEYAEFDESEKPTSLVERMKDKGPVWEEIVRENGLHTTKLEGVATWWFADVILGGECLLDSMNKSKEHGYLGFRNTKNSLISVIDKMKAHKIVP</sequence>
<keyword id="KW-0521">NADP</keyword>
<keyword id="KW-0560">Oxidoreductase</keyword>
<dbReference type="EC" id="1.3.1.122" evidence="2"/>
<dbReference type="EMBL" id="KU842379">
    <property type="protein sequence ID" value="AON76723.1"/>
    <property type="molecule type" value="mRNA"/>
</dbReference>
<dbReference type="SMR" id="A0A1C9CX66"/>
<dbReference type="GO" id="GO:0016627">
    <property type="term" value="F:oxidoreductase activity, acting on the CH-CH group of donors"/>
    <property type="evidence" value="ECO:0000314"/>
    <property type="project" value="UniProtKB"/>
</dbReference>
<dbReference type="GO" id="GO:0043693">
    <property type="term" value="P:monoterpene biosynthetic process"/>
    <property type="evidence" value="ECO:0000314"/>
    <property type="project" value="UniProtKB"/>
</dbReference>
<dbReference type="CDD" id="cd08948">
    <property type="entry name" value="5beta-POR_like_SDR_a"/>
    <property type="match status" value="1"/>
</dbReference>
<dbReference type="FunFam" id="3.40.50.720:FF:000808">
    <property type="entry name" value="Iridoid synthase"/>
    <property type="match status" value="1"/>
</dbReference>
<dbReference type="Gene3D" id="3.40.50.720">
    <property type="entry name" value="NAD(P)-binding Rossmann-like Domain"/>
    <property type="match status" value="1"/>
</dbReference>
<dbReference type="InterPro" id="IPR036291">
    <property type="entry name" value="NAD(P)-bd_dom_sf"/>
</dbReference>
<dbReference type="InterPro" id="IPR055222">
    <property type="entry name" value="PRISE-like_Rossmann-fold"/>
</dbReference>
<dbReference type="PANTHER" id="PTHR32487">
    <property type="entry name" value="3-OXO-DELTA(4,5)-STEROID 5-BETA-REDUCTASE"/>
    <property type="match status" value="1"/>
</dbReference>
<dbReference type="PANTHER" id="PTHR32487:SF0">
    <property type="entry name" value="3-OXO-DELTA(4,5)-STEROID 5-BETA-REDUCTASE"/>
    <property type="match status" value="1"/>
</dbReference>
<dbReference type="Pfam" id="PF22917">
    <property type="entry name" value="PRISE"/>
    <property type="match status" value="1"/>
</dbReference>
<dbReference type="SUPFAM" id="SSF51735">
    <property type="entry name" value="NAD(P)-binding Rossmann-fold domains"/>
    <property type="match status" value="1"/>
</dbReference>
<evidence type="ECO:0000250" key="1">
    <source>
        <dbReference type="UniProtKB" id="K7WDL7"/>
    </source>
</evidence>
<evidence type="ECO:0000269" key="2">
    <source>
    </source>
</evidence>
<evidence type="ECO:0000303" key="3">
    <source>
    </source>
</evidence>
<evidence type="ECO:0000305" key="4"/>
<proteinExistence type="evidence at protein level"/>
<organism>
    <name type="scientific">Camptotheca acuminata</name>
    <name type="common">Happy tree</name>
    <dbReference type="NCBI Taxonomy" id="16922"/>
    <lineage>
        <taxon>Eukaryota</taxon>
        <taxon>Viridiplantae</taxon>
        <taxon>Streptophyta</taxon>
        <taxon>Embryophyta</taxon>
        <taxon>Tracheophyta</taxon>
        <taxon>Spermatophyta</taxon>
        <taxon>Magnoliopsida</taxon>
        <taxon>eudicotyledons</taxon>
        <taxon>Gunneridae</taxon>
        <taxon>Pentapetalae</taxon>
        <taxon>asterids</taxon>
        <taxon>Cornales</taxon>
        <taxon>Nyssaceae</taxon>
        <taxon>Camptotheca</taxon>
    </lineage>
</organism>
<gene>
    <name evidence="3" type="primary">CYC2</name>
</gene>